<accession>P53841</accession>
<accession>B2Y304</accession>
<accession>B2Y305</accession>
<accession>B2Y306</accession>
<accession>B2Y308</accession>
<accession>D6W0S5</accession>
<comment type="miscellaneous">
    <text>Open reading frame that exhibits genomic organization compatible with a translational readthrough-dependent mode of expression. The sequence can give a readthrough frequency of 9% when cloned in a plasmid with reporter genes. When the initial stop codon is bypassed, translation will go on to the second stop codon 321 bp downstream.</text>
</comment>
<comment type="miscellaneous">
    <text>This protein has no orthologs in any species other than the S.cerevisiae lineage. It may be the result of de novo origination of a protein-coding gene.</text>
</comment>
<dbReference type="EMBL" id="EU375912">
    <property type="protein sequence ID" value="ACB40933.1"/>
    <property type="molecule type" value="Genomic_DNA"/>
</dbReference>
<dbReference type="EMBL" id="EU375913">
    <property type="protein sequence ID" value="ACB40934.1"/>
    <property type="molecule type" value="Genomic_DNA"/>
</dbReference>
<dbReference type="EMBL" id="EU375914">
    <property type="protein sequence ID" value="ACB40935.1"/>
    <property type="molecule type" value="Genomic_DNA"/>
</dbReference>
<dbReference type="EMBL" id="EU375915">
    <property type="protein sequence ID" value="ACB40936.1"/>
    <property type="molecule type" value="Genomic_DNA"/>
</dbReference>
<dbReference type="EMBL" id="EU375916">
    <property type="protein sequence ID" value="ACB40937.1"/>
    <property type="molecule type" value="Genomic_DNA"/>
</dbReference>
<dbReference type="EMBL" id="EU375917">
    <property type="protein sequence ID" value="ACB40938.1"/>
    <property type="molecule type" value="Genomic_DNA"/>
</dbReference>
<dbReference type="EMBL" id="EU375918">
    <property type="protein sequence ID" value="ACB40939.1"/>
    <property type="molecule type" value="Genomic_DNA"/>
</dbReference>
<dbReference type="EMBL" id="EU375919">
    <property type="protein sequence ID" value="ACB40940.1"/>
    <property type="molecule type" value="Genomic_DNA"/>
</dbReference>
<dbReference type="EMBL" id="EU375920">
    <property type="protein sequence ID" value="ACB40941.1"/>
    <property type="molecule type" value="Genomic_DNA"/>
</dbReference>
<dbReference type="EMBL" id="EU375921">
    <property type="protein sequence ID" value="ACB40942.1"/>
    <property type="molecule type" value="Genomic_DNA"/>
</dbReference>
<dbReference type="EMBL" id="EU375922">
    <property type="protein sequence ID" value="ACB40943.1"/>
    <property type="molecule type" value="Genomic_DNA"/>
</dbReference>
<dbReference type="EMBL" id="EU375923">
    <property type="protein sequence ID" value="ACB40944.1"/>
    <property type="molecule type" value="Genomic_DNA"/>
</dbReference>
<dbReference type="EMBL" id="EU375924">
    <property type="protein sequence ID" value="ACB40945.1"/>
    <property type="molecule type" value="Genomic_DNA"/>
</dbReference>
<dbReference type="EMBL" id="EU375925">
    <property type="protein sequence ID" value="ACB40946.1"/>
    <property type="molecule type" value="Genomic_DNA"/>
</dbReference>
<dbReference type="EMBL" id="X92494">
    <property type="protein sequence ID" value="CAA63229.1"/>
    <property type="molecule type" value="Genomic_DNA"/>
</dbReference>
<dbReference type="EMBL" id="Z71545">
    <property type="protein sequence ID" value="CAA96176.1"/>
    <property type="molecule type" value="Genomic_DNA"/>
</dbReference>
<dbReference type="EMBL" id="BK006947">
    <property type="protein sequence ID" value="DAA10291.1"/>
    <property type="molecule type" value="Genomic_DNA"/>
</dbReference>
<dbReference type="PIR" id="S60913">
    <property type="entry name" value="S60913"/>
</dbReference>
<dbReference type="RefSeq" id="NP_014130.1">
    <property type="nucleotide sequence ID" value="NM_001183107.1"/>
</dbReference>
<dbReference type="SMR" id="P53841"/>
<dbReference type="BioGRID" id="35571">
    <property type="interactions" value="140"/>
</dbReference>
<dbReference type="FunCoup" id="P53841">
    <property type="interactions" value="21"/>
</dbReference>
<dbReference type="STRING" id="4932.YNL269W"/>
<dbReference type="PaxDb" id="4932-YNL269W"/>
<dbReference type="EnsemblFungi" id="YNL269W_mRNA">
    <property type="protein sequence ID" value="YNL269W"/>
    <property type="gene ID" value="YNL269W"/>
</dbReference>
<dbReference type="GeneID" id="855452"/>
<dbReference type="KEGG" id="sce:YNL269W"/>
<dbReference type="AGR" id="SGD:S000005213"/>
<dbReference type="SGD" id="S000005213">
    <property type="gene designation" value="BSC4"/>
</dbReference>
<dbReference type="VEuPathDB" id="FungiDB:YNL269W"/>
<dbReference type="HOGENOM" id="CLU_2039888_0_0_1"/>
<dbReference type="InParanoid" id="P53841"/>
<dbReference type="BioCyc" id="YEAST:G3O-33263-MONOMER"/>
<dbReference type="PRO" id="PR:P53841"/>
<dbReference type="Proteomes" id="UP000002311">
    <property type="component" value="Chromosome XIV"/>
</dbReference>
<dbReference type="RNAct" id="P53841">
    <property type="molecule type" value="protein"/>
</dbReference>
<keyword id="KW-1185">Reference proteome</keyword>
<proteinExistence type="predicted"/>
<name>BSC4_YEAST</name>
<feature type="chain" id="PRO_0000064994" description="Bypass of stop codon protein 4">
    <location>
        <begin position="1"/>
        <end position="131"/>
    </location>
</feature>
<feature type="sequence variant" description="In strain: XH1549." evidence="1">
    <original>I</original>
    <variation>V</variation>
    <location>
        <position position="3"/>
    </location>
</feature>
<feature type="sequence variant" description="In strain: AS2.101, AS2.1406, AS2.179, AS2.7, AS2.724, AS2.771, AS2.820 and AS2.93." evidence="1">
    <original>R</original>
    <variation>Q</variation>
    <location>
        <position position="6"/>
    </location>
</feature>
<feature type="sequence variant" description="In strain: XH1549.">
    <original>NK</original>
    <variation>T</variation>
    <location>
        <begin position="9"/>
        <end position="10"/>
    </location>
</feature>
<feature type="sequence variant" description="In strain: XH1549." evidence="1">
    <original>I</original>
    <variation>L</variation>
    <location>
        <position position="16"/>
    </location>
</feature>
<feature type="sequence variant" description="In strain: XH1549." evidence="1">
    <original>K</original>
    <variation>Q</variation>
    <location>
        <position position="19"/>
    </location>
</feature>
<feature type="sequence variant" description="In strain: XH1549." evidence="1">
    <original>T</original>
    <variation>S</variation>
    <location>
        <position position="22"/>
    </location>
</feature>
<feature type="sequence variant" description="In strain: XH1549." evidence="1">
    <original>V</original>
    <variation>G</variation>
    <location>
        <position position="32"/>
    </location>
</feature>
<feature type="sequence variant" description="In strain: AS2.101, AS2.1406, AS2.179, AS2.7, AS2.724, AS2.771, AS2.820, AS2.93 and XH1549." evidence="1">
    <original>S</original>
    <variation>N</variation>
    <location>
        <position position="42"/>
    </location>
</feature>
<feature type="sequence variant" description="In strain: AS2.724 and AS2.820." evidence="1">
    <original>R</original>
    <variation>H</variation>
    <location>
        <position position="92"/>
    </location>
</feature>
<reference key="1">
    <citation type="journal article" date="2008" name="Genetics">
        <title>De novo origination of a new protein-coding gene in Saccharomyces cerevisiae.</title>
        <authorList>
            <person name="Cai J."/>
            <person name="Zhao R."/>
            <person name="Jiang H."/>
            <person name="Wang W."/>
        </authorList>
    </citation>
    <scope>NUCLEOTIDE SEQUENCE [GENOMIC DNA]</scope>
    <scope>VARIANTS VAL-3; GLN-6; THR-9; LEU-16; GLN-19; SER-22; GLY-32; ASN-42 AND HIS-92</scope>
    <source>
        <strain>AS2.101</strain>
        <strain>AS2.1406</strain>
        <strain>AS2.148</strain>
        <strain>AS2.179</strain>
        <strain>AS2.2</strain>
        <strain>AS2.2079</strain>
        <strain>AS2.2080</strain>
        <strain>AS2.3</strain>
        <strain>AS2.7</strain>
        <strain>AS2.724</strain>
        <strain>AS2.771</strain>
        <strain>AS2.820</strain>
        <strain>AS2.93</strain>
        <strain>XH1549</strain>
    </source>
</reference>
<reference key="2">
    <citation type="journal article" date="1996" name="Yeast">
        <title>The sequence of a 24,152 bp segment from the left arm of chromosome XIV from Saccharomyces cerevisiae between the BNI1 and the POL2 genes.</title>
        <authorList>
            <person name="Sen-Gupta M."/>
            <person name="Lyck R."/>
            <person name="Fleig U."/>
            <person name="Niedenthal R.K."/>
            <person name="Hegemann J.H."/>
        </authorList>
    </citation>
    <scope>NUCLEOTIDE SEQUENCE [GENOMIC DNA]</scope>
    <source>
        <strain>ATCC 96604 / S288c / FY1679</strain>
    </source>
</reference>
<reference key="3">
    <citation type="journal article" date="1997" name="Nature">
        <title>The nucleotide sequence of Saccharomyces cerevisiae chromosome XIV and its evolutionary implications.</title>
        <authorList>
            <person name="Philippsen P."/>
            <person name="Kleine K."/>
            <person name="Poehlmann R."/>
            <person name="Duesterhoeft A."/>
            <person name="Hamberg K."/>
            <person name="Hegemann J.H."/>
            <person name="Obermaier B."/>
            <person name="Urrestarazu L.A."/>
            <person name="Aert R."/>
            <person name="Albermann K."/>
            <person name="Altmann R."/>
            <person name="Andre B."/>
            <person name="Baladron V."/>
            <person name="Ballesta J.P.G."/>
            <person name="Becam A.-M."/>
            <person name="Beinhauer J.D."/>
            <person name="Boskovic J."/>
            <person name="Buitrago M.J."/>
            <person name="Bussereau F."/>
            <person name="Coster F."/>
            <person name="Crouzet M."/>
            <person name="D'Angelo M."/>
            <person name="Dal Pero F."/>
            <person name="De Antoni A."/>
            <person name="del Rey F."/>
            <person name="Doignon F."/>
            <person name="Domdey H."/>
            <person name="Dubois E."/>
            <person name="Fiedler T.A."/>
            <person name="Fleig U."/>
            <person name="Floeth M."/>
            <person name="Fritz C."/>
            <person name="Gaillardin C."/>
            <person name="Garcia-Cantalejo J.M."/>
            <person name="Glansdorff N."/>
            <person name="Goffeau A."/>
            <person name="Gueldener U."/>
            <person name="Herbert C.J."/>
            <person name="Heumann K."/>
            <person name="Heuss-Neitzel D."/>
            <person name="Hilbert H."/>
            <person name="Hinni K."/>
            <person name="Iraqui Houssaini I."/>
            <person name="Jacquet M."/>
            <person name="Jimenez A."/>
            <person name="Jonniaux J.-L."/>
            <person name="Karpfinger-Hartl L."/>
            <person name="Lanfranchi G."/>
            <person name="Lepingle A."/>
            <person name="Levesque H."/>
            <person name="Lyck R."/>
            <person name="Maftahi M."/>
            <person name="Mallet L."/>
            <person name="Maurer C.T.C."/>
            <person name="Messenguy F."/>
            <person name="Mewes H.-W."/>
            <person name="Moestl D."/>
            <person name="Nasr F."/>
            <person name="Nicaud J.-M."/>
            <person name="Niedenthal R.K."/>
            <person name="Pandolfo D."/>
            <person name="Pierard A."/>
            <person name="Piravandi E."/>
            <person name="Planta R.J."/>
            <person name="Pohl T.M."/>
            <person name="Purnelle B."/>
            <person name="Rebischung C."/>
            <person name="Remacha M.A."/>
            <person name="Revuelta J.L."/>
            <person name="Rinke M."/>
            <person name="Saiz J.E."/>
            <person name="Sartorello F."/>
            <person name="Scherens B."/>
            <person name="Sen-Gupta M."/>
            <person name="Soler-Mira A."/>
            <person name="Urbanus J.H.M."/>
            <person name="Valle G."/>
            <person name="Van Dyck L."/>
            <person name="Verhasselt P."/>
            <person name="Vierendeels F."/>
            <person name="Vissers S."/>
            <person name="Voet M."/>
            <person name="Volckaert G."/>
            <person name="Wach A."/>
            <person name="Wambutt R."/>
            <person name="Wedler H."/>
            <person name="Zollner A."/>
            <person name="Hani J."/>
        </authorList>
    </citation>
    <scope>NUCLEOTIDE SEQUENCE [LARGE SCALE GENOMIC DNA]</scope>
    <source>
        <strain>ATCC 204508 / S288c</strain>
    </source>
</reference>
<reference key="4">
    <citation type="journal article" date="2014" name="G3 (Bethesda)">
        <title>The reference genome sequence of Saccharomyces cerevisiae: Then and now.</title>
        <authorList>
            <person name="Engel S.R."/>
            <person name="Dietrich F.S."/>
            <person name="Fisk D.G."/>
            <person name="Binkley G."/>
            <person name="Balakrishnan R."/>
            <person name="Costanzo M.C."/>
            <person name="Dwight S.S."/>
            <person name="Hitz B.C."/>
            <person name="Karra K."/>
            <person name="Nash R.S."/>
            <person name="Weng S."/>
            <person name="Wong E.D."/>
            <person name="Lloyd P."/>
            <person name="Skrzypek M.S."/>
            <person name="Miyasato S.R."/>
            <person name="Simison M."/>
            <person name="Cherry J.M."/>
        </authorList>
    </citation>
    <scope>GENOME REANNOTATION</scope>
    <source>
        <strain>ATCC 204508 / S288c</strain>
    </source>
</reference>
<reference key="5">
    <citation type="journal article" date="2003" name="Nucleic Acids Res.">
        <title>Identification of stop codon readthrough genes in Saccharomyces cerevisiae.</title>
        <authorList>
            <person name="Namy O."/>
            <person name="Duchateau-Nguyen G."/>
            <person name="Hatin I."/>
            <person name="Hermann-Le Denmat S."/>
            <person name="Termier M."/>
            <person name="Rousset J.-P."/>
        </authorList>
    </citation>
    <scope>GENE NAME</scope>
</reference>
<organism>
    <name type="scientific">Saccharomyces cerevisiae (strain ATCC 204508 / S288c)</name>
    <name type="common">Baker's yeast</name>
    <dbReference type="NCBI Taxonomy" id="559292"/>
    <lineage>
        <taxon>Eukaryota</taxon>
        <taxon>Fungi</taxon>
        <taxon>Dikarya</taxon>
        <taxon>Ascomycota</taxon>
        <taxon>Saccharomycotina</taxon>
        <taxon>Saccharomycetes</taxon>
        <taxon>Saccharomycetales</taxon>
        <taxon>Saccharomycetaceae</taxon>
        <taxon>Saccharomyces</taxon>
    </lineage>
</organism>
<gene>
    <name type="primary">BSC4</name>
    <name type="ordered locus">YNL269W</name>
    <name type="ORF">N0670</name>
</gene>
<protein>
    <recommendedName>
        <fullName>Bypass of stop codon protein 4</fullName>
    </recommendedName>
</protein>
<evidence type="ECO:0000269" key="1">
    <source>
    </source>
</evidence>
<sequence>MSIVLRKSNKKNKNCITSKFYTIHIIKISTPVFRAPIAIGESPYVEWSCLQVVFRKDMVTKKTTFAQLITRLNHFLCQALKRRDSKTYILCRTAVFGAMTPFSPRKSHINNKLPMQPRKKKIVIIYVVRFH</sequence>